<reference key="1">
    <citation type="journal article" date="2004" name="PLoS Biol.">
        <title>Phylogenomics of the reproductive parasite Wolbachia pipientis wMel: a streamlined genome overrun by mobile genetic elements.</title>
        <authorList>
            <person name="Wu M."/>
            <person name="Sun L.V."/>
            <person name="Vamathevan J.J."/>
            <person name="Riegler M."/>
            <person name="DeBoy R.T."/>
            <person name="Brownlie J.C."/>
            <person name="McGraw E.A."/>
            <person name="Martin W."/>
            <person name="Esser C."/>
            <person name="Ahmadinejad N."/>
            <person name="Wiegand C."/>
            <person name="Madupu R."/>
            <person name="Beanan M.J."/>
            <person name="Brinkac L.M."/>
            <person name="Daugherty S.C."/>
            <person name="Durkin A.S."/>
            <person name="Kolonay J.F."/>
            <person name="Nelson W.C."/>
            <person name="Mohamoud Y."/>
            <person name="Lee P."/>
            <person name="Berry K.J."/>
            <person name="Young M.B."/>
            <person name="Utterback T.R."/>
            <person name="Weidman J.F."/>
            <person name="Nierman W.C."/>
            <person name="Paulsen I.T."/>
            <person name="Nelson K.E."/>
            <person name="Tettelin H."/>
            <person name="O'Neill S.L."/>
            <person name="Eisen J.A."/>
        </authorList>
    </citation>
    <scope>NUCLEOTIDE SEQUENCE [LARGE SCALE GENOMIC DNA]</scope>
</reference>
<protein>
    <recommendedName>
        <fullName evidence="1">Ribosomal RNA small subunit methyltransferase H</fullName>
        <ecNumber evidence="1">2.1.1.199</ecNumber>
    </recommendedName>
    <alternativeName>
        <fullName evidence="1">16S rRNA m(4)C1402 methyltransferase</fullName>
    </alternativeName>
    <alternativeName>
        <fullName evidence="1">rRNA (cytosine-N(4)-)-methyltransferase RsmH</fullName>
    </alternativeName>
</protein>
<gene>
    <name evidence="1" type="primary">rsmH</name>
    <name type="synonym">mraW</name>
    <name type="ordered locus">WD_0170</name>
</gene>
<feature type="chain" id="PRO_0000108748" description="Ribosomal RNA small subunit methyltransferase H">
    <location>
        <begin position="1"/>
        <end position="314"/>
    </location>
</feature>
<feature type="binding site" evidence="1">
    <location>
        <begin position="31"/>
        <end position="33"/>
    </location>
    <ligand>
        <name>S-adenosyl-L-methionine</name>
        <dbReference type="ChEBI" id="CHEBI:59789"/>
    </ligand>
</feature>
<feature type="binding site" evidence="1">
    <location>
        <position position="49"/>
    </location>
    <ligand>
        <name>S-adenosyl-L-methionine</name>
        <dbReference type="ChEBI" id="CHEBI:59789"/>
    </ligand>
</feature>
<feature type="binding site" evidence="1">
    <location>
        <position position="76"/>
    </location>
    <ligand>
        <name>S-adenosyl-L-methionine</name>
        <dbReference type="ChEBI" id="CHEBI:59789"/>
    </ligand>
</feature>
<feature type="binding site" evidence="1">
    <location>
        <position position="118"/>
    </location>
    <ligand>
        <name>S-adenosyl-L-methionine</name>
        <dbReference type="ChEBI" id="CHEBI:59789"/>
    </ligand>
</feature>
<feature type="binding site" evidence="1">
    <location>
        <position position="125"/>
    </location>
    <ligand>
        <name>S-adenosyl-L-methionine</name>
        <dbReference type="ChEBI" id="CHEBI:59789"/>
    </ligand>
</feature>
<evidence type="ECO:0000255" key="1">
    <source>
        <dbReference type="HAMAP-Rule" id="MF_01007"/>
    </source>
</evidence>
<accession>P62478</accession>
<comment type="function">
    <text evidence="1">Specifically methylates the N4 position of cytidine in position 1402 (C1402) of 16S rRNA.</text>
</comment>
<comment type="catalytic activity">
    <reaction evidence="1">
        <text>cytidine(1402) in 16S rRNA + S-adenosyl-L-methionine = N(4)-methylcytidine(1402) in 16S rRNA + S-adenosyl-L-homocysteine + H(+)</text>
        <dbReference type="Rhea" id="RHEA:42928"/>
        <dbReference type="Rhea" id="RHEA-COMP:10286"/>
        <dbReference type="Rhea" id="RHEA-COMP:10287"/>
        <dbReference type="ChEBI" id="CHEBI:15378"/>
        <dbReference type="ChEBI" id="CHEBI:57856"/>
        <dbReference type="ChEBI" id="CHEBI:59789"/>
        <dbReference type="ChEBI" id="CHEBI:74506"/>
        <dbReference type="ChEBI" id="CHEBI:82748"/>
        <dbReference type="EC" id="2.1.1.199"/>
    </reaction>
</comment>
<comment type="subcellular location">
    <subcellularLocation>
        <location evidence="1">Cytoplasm</location>
    </subcellularLocation>
</comment>
<comment type="similarity">
    <text evidence="1">Belongs to the methyltransferase superfamily. RsmH family.</text>
</comment>
<proteinExistence type="inferred from homology"/>
<keyword id="KW-0963">Cytoplasm</keyword>
<keyword id="KW-0489">Methyltransferase</keyword>
<keyword id="KW-0698">rRNA processing</keyword>
<keyword id="KW-0949">S-adenosyl-L-methionine</keyword>
<keyword id="KW-0808">Transferase</keyword>
<name>RSMH_WOLPM</name>
<sequence length="314" mass="34980">MTHTPVLLKEMLSLLSPQDGGIYVDATFGAGGYSKAILESADCKVYAIDRDETVTKFYDDLSVRYPDRIKLFIEKFSNIKSILSSVEPSPVIPVLDTGKNNWSRAGMTSNGVDGVVFDIGVSSMQLDNGDRGFSFLHDGPLDMSMDNSSYINASTFVNALREEEIANTIYNYGGERHSRKIARAIINARKKKTIKTTFELADIVRSVVFRGKSKIDPATRTFQAIRIWVNDELEELEKGIKAASEILSENGKLIVVTFHSLEDRIVKTFFKDLCATDCKTFSLLNKKVIEASIEEVSANPRSRSAKLRAIQRLS</sequence>
<dbReference type="EC" id="2.1.1.199" evidence="1"/>
<dbReference type="EMBL" id="AE017196">
    <property type="protein sequence ID" value="AAS13920.1"/>
    <property type="molecule type" value="Genomic_DNA"/>
</dbReference>
<dbReference type="RefSeq" id="WP_010962409.1">
    <property type="nucleotide sequence ID" value="NZ_OX384529.1"/>
</dbReference>
<dbReference type="SMR" id="P62478"/>
<dbReference type="EnsemblBacteria" id="AAS13920">
    <property type="protein sequence ID" value="AAS13920"/>
    <property type="gene ID" value="WD_0170"/>
</dbReference>
<dbReference type="GeneID" id="70035660"/>
<dbReference type="KEGG" id="wol:WD_0170"/>
<dbReference type="eggNOG" id="COG0275">
    <property type="taxonomic scope" value="Bacteria"/>
</dbReference>
<dbReference type="Proteomes" id="UP000008215">
    <property type="component" value="Chromosome"/>
</dbReference>
<dbReference type="GO" id="GO:0005737">
    <property type="term" value="C:cytoplasm"/>
    <property type="evidence" value="ECO:0007669"/>
    <property type="project" value="UniProtKB-SubCell"/>
</dbReference>
<dbReference type="GO" id="GO:0071424">
    <property type="term" value="F:rRNA (cytosine-N4-)-methyltransferase activity"/>
    <property type="evidence" value="ECO:0007669"/>
    <property type="project" value="UniProtKB-UniRule"/>
</dbReference>
<dbReference type="GO" id="GO:0070475">
    <property type="term" value="P:rRNA base methylation"/>
    <property type="evidence" value="ECO:0007669"/>
    <property type="project" value="UniProtKB-UniRule"/>
</dbReference>
<dbReference type="FunFam" id="1.10.150.170:FF:000003">
    <property type="entry name" value="Ribosomal RNA small subunit methyltransferase H"/>
    <property type="match status" value="1"/>
</dbReference>
<dbReference type="Gene3D" id="1.10.150.170">
    <property type="entry name" value="Putative methyltransferase TM0872, insert domain"/>
    <property type="match status" value="1"/>
</dbReference>
<dbReference type="Gene3D" id="3.40.50.150">
    <property type="entry name" value="Vaccinia Virus protein VP39"/>
    <property type="match status" value="1"/>
</dbReference>
<dbReference type="HAMAP" id="MF_01007">
    <property type="entry name" value="16SrRNA_methyltr_H"/>
    <property type="match status" value="1"/>
</dbReference>
<dbReference type="InterPro" id="IPR002903">
    <property type="entry name" value="RsmH"/>
</dbReference>
<dbReference type="InterPro" id="IPR023397">
    <property type="entry name" value="SAM-dep_MeTrfase_MraW_recog"/>
</dbReference>
<dbReference type="InterPro" id="IPR029063">
    <property type="entry name" value="SAM-dependent_MTases_sf"/>
</dbReference>
<dbReference type="NCBIfam" id="TIGR00006">
    <property type="entry name" value="16S rRNA (cytosine(1402)-N(4))-methyltransferase RsmH"/>
    <property type="match status" value="1"/>
</dbReference>
<dbReference type="PANTHER" id="PTHR11265:SF0">
    <property type="entry name" value="12S RRNA N4-METHYLCYTIDINE METHYLTRANSFERASE"/>
    <property type="match status" value="1"/>
</dbReference>
<dbReference type="PANTHER" id="PTHR11265">
    <property type="entry name" value="S-ADENOSYL-METHYLTRANSFERASE MRAW"/>
    <property type="match status" value="1"/>
</dbReference>
<dbReference type="Pfam" id="PF01795">
    <property type="entry name" value="Methyltransf_5"/>
    <property type="match status" value="1"/>
</dbReference>
<dbReference type="PIRSF" id="PIRSF004486">
    <property type="entry name" value="MraW"/>
    <property type="match status" value="1"/>
</dbReference>
<dbReference type="SUPFAM" id="SSF81799">
    <property type="entry name" value="Putative methyltransferase TM0872, insert domain"/>
    <property type="match status" value="1"/>
</dbReference>
<dbReference type="SUPFAM" id="SSF53335">
    <property type="entry name" value="S-adenosyl-L-methionine-dependent methyltransferases"/>
    <property type="match status" value="1"/>
</dbReference>
<organism>
    <name type="scientific">Wolbachia pipientis wMel</name>
    <dbReference type="NCBI Taxonomy" id="163164"/>
    <lineage>
        <taxon>Bacteria</taxon>
        <taxon>Pseudomonadati</taxon>
        <taxon>Pseudomonadota</taxon>
        <taxon>Alphaproteobacteria</taxon>
        <taxon>Rickettsiales</taxon>
        <taxon>Anaplasmataceae</taxon>
        <taxon>Wolbachieae</taxon>
        <taxon>Wolbachia</taxon>
    </lineage>
</organism>